<organism>
    <name type="scientific">Saccharum hybrid</name>
    <name type="common">Sugarcane</name>
    <dbReference type="NCBI Taxonomy" id="15819"/>
    <lineage>
        <taxon>Eukaryota</taxon>
        <taxon>Viridiplantae</taxon>
        <taxon>Streptophyta</taxon>
        <taxon>Embryophyta</taxon>
        <taxon>Tracheophyta</taxon>
        <taxon>Spermatophyta</taxon>
        <taxon>Magnoliopsida</taxon>
        <taxon>Liliopsida</taxon>
        <taxon>Poales</taxon>
        <taxon>Poaceae</taxon>
        <taxon>PACMAD clade</taxon>
        <taxon>Panicoideae</taxon>
        <taxon>Andropogonodae</taxon>
        <taxon>Andropogoneae</taxon>
        <taxon>Saccharinae</taxon>
        <taxon>Saccharum</taxon>
    </lineage>
</organism>
<dbReference type="EMBL" id="AE009947">
    <property type="protein sequence ID" value="AAT44689.1"/>
    <property type="molecule type" value="Genomic_DNA"/>
</dbReference>
<dbReference type="SMR" id="Q6L3A3"/>
<dbReference type="GO" id="GO:0009535">
    <property type="term" value="C:chloroplast thylakoid membrane"/>
    <property type="evidence" value="ECO:0007669"/>
    <property type="project" value="UniProtKB-SubCell"/>
</dbReference>
<dbReference type="GO" id="GO:0005886">
    <property type="term" value="C:plasma membrane"/>
    <property type="evidence" value="ECO:0007669"/>
    <property type="project" value="UniProtKB-UniRule"/>
</dbReference>
<dbReference type="GO" id="GO:0045259">
    <property type="term" value="C:proton-transporting ATP synthase complex"/>
    <property type="evidence" value="ECO:0007669"/>
    <property type="project" value="UniProtKB-KW"/>
</dbReference>
<dbReference type="GO" id="GO:0046933">
    <property type="term" value="F:proton-transporting ATP synthase activity, rotational mechanism"/>
    <property type="evidence" value="ECO:0007669"/>
    <property type="project" value="UniProtKB-UniRule"/>
</dbReference>
<dbReference type="CDD" id="cd00310">
    <property type="entry name" value="ATP-synt_Fo_a_6"/>
    <property type="match status" value="1"/>
</dbReference>
<dbReference type="FunFam" id="1.20.120.220:FF:000001">
    <property type="entry name" value="ATP synthase subunit a, chloroplastic"/>
    <property type="match status" value="1"/>
</dbReference>
<dbReference type="Gene3D" id="1.20.120.220">
    <property type="entry name" value="ATP synthase, F0 complex, subunit A"/>
    <property type="match status" value="1"/>
</dbReference>
<dbReference type="HAMAP" id="MF_01393">
    <property type="entry name" value="ATP_synth_a_bact"/>
    <property type="match status" value="1"/>
</dbReference>
<dbReference type="InterPro" id="IPR045082">
    <property type="entry name" value="ATP_syn_F0_a_bact/chloroplast"/>
</dbReference>
<dbReference type="InterPro" id="IPR000568">
    <property type="entry name" value="ATP_synth_F0_asu"/>
</dbReference>
<dbReference type="InterPro" id="IPR023011">
    <property type="entry name" value="ATP_synth_F0_asu_AS"/>
</dbReference>
<dbReference type="InterPro" id="IPR035908">
    <property type="entry name" value="F0_ATP_A_sf"/>
</dbReference>
<dbReference type="NCBIfam" id="TIGR01131">
    <property type="entry name" value="ATP_synt_6_or_A"/>
    <property type="match status" value="1"/>
</dbReference>
<dbReference type="PANTHER" id="PTHR42823">
    <property type="entry name" value="ATP SYNTHASE SUBUNIT A, CHLOROPLASTIC"/>
    <property type="match status" value="1"/>
</dbReference>
<dbReference type="PANTHER" id="PTHR42823:SF3">
    <property type="entry name" value="ATP SYNTHASE SUBUNIT A, CHLOROPLASTIC"/>
    <property type="match status" value="1"/>
</dbReference>
<dbReference type="Pfam" id="PF00119">
    <property type="entry name" value="ATP-synt_A"/>
    <property type="match status" value="1"/>
</dbReference>
<dbReference type="PRINTS" id="PR00123">
    <property type="entry name" value="ATPASEA"/>
</dbReference>
<dbReference type="SUPFAM" id="SSF81336">
    <property type="entry name" value="F1F0 ATP synthase subunit A"/>
    <property type="match status" value="1"/>
</dbReference>
<dbReference type="PROSITE" id="PS00449">
    <property type="entry name" value="ATPASE_A"/>
    <property type="match status" value="1"/>
</dbReference>
<geneLocation type="chloroplast"/>
<comment type="function">
    <text evidence="1">Key component of the proton channel; it plays a direct role in the translocation of protons across the membrane.</text>
</comment>
<comment type="subunit">
    <text evidence="1">F-type ATPases have 2 components, CF(1) - the catalytic core - and CF(0) - the membrane proton channel. CF(1) has five subunits: alpha(3), beta(3), gamma(1), delta(1), epsilon(1). CF(0) has four main subunits: a, b, b' and c.</text>
</comment>
<comment type="subcellular location">
    <subcellularLocation>
        <location evidence="1">Plastid</location>
        <location evidence="1">Chloroplast thylakoid membrane</location>
        <topology evidence="1">Multi-pass membrane protein</topology>
    </subcellularLocation>
</comment>
<comment type="similarity">
    <text evidence="1">Belongs to the ATPase A chain family.</text>
</comment>
<proteinExistence type="inferred from homology"/>
<feature type="chain" id="PRO_0000226902" description="ATP synthase subunit a, chloroplastic">
    <location>
        <begin position="1"/>
        <end position="247"/>
    </location>
</feature>
<feature type="transmembrane region" description="Helical" evidence="1">
    <location>
        <begin position="38"/>
        <end position="58"/>
    </location>
</feature>
<feature type="transmembrane region" description="Helical" evidence="1">
    <location>
        <begin position="95"/>
        <end position="115"/>
    </location>
</feature>
<feature type="transmembrane region" description="Helical" evidence="1">
    <location>
        <begin position="134"/>
        <end position="154"/>
    </location>
</feature>
<feature type="transmembrane region" description="Helical" evidence="1">
    <location>
        <begin position="199"/>
        <end position="219"/>
    </location>
</feature>
<feature type="transmembrane region" description="Helical" evidence="1">
    <location>
        <begin position="220"/>
        <end position="240"/>
    </location>
</feature>
<sequence>MNITPCSIKTLKGLYDISGVEVGQHFYWQIGGFQIHAQVLITSWVVITILLGSVIIAVRNPQTIPTDGQNFFEYVLEFIRDLSKTQIGEEYGPWVPFIGTMFLFIFVSNWSGALLPWKIIELPHGELAAPTNDINTTVALALLTSAAYFYAGLSKKGLSYFEKYIKPTPILLPINILEDFTKPLSLSFRLFGNILADELVVVVLVSLVPLVVPIPVMFLGLFTSGIQALIFATLAAAYIGESMEGHH</sequence>
<keyword id="KW-0066">ATP synthesis</keyword>
<keyword id="KW-0138">CF(0)</keyword>
<keyword id="KW-0150">Chloroplast</keyword>
<keyword id="KW-0375">Hydrogen ion transport</keyword>
<keyword id="KW-0406">Ion transport</keyword>
<keyword id="KW-0472">Membrane</keyword>
<keyword id="KW-0934">Plastid</keyword>
<keyword id="KW-0793">Thylakoid</keyword>
<keyword id="KW-0812">Transmembrane</keyword>
<keyword id="KW-1133">Transmembrane helix</keyword>
<keyword id="KW-0813">Transport</keyword>
<accession>Q6L3A3</accession>
<reference key="1">
    <citation type="journal article" date="2004" name="Curr. Genet.">
        <title>Structural features and transcript-editing analysis of sugarcane (Saccharum officinarum L.) chloroplast genome.</title>
        <authorList>
            <person name="Calsa T. Jr."/>
            <person name="Carraro D.M."/>
            <person name="Benatti M.R."/>
            <person name="Barbosa A.C."/>
            <person name="Kitajima J.P."/>
            <person name="Carrer H."/>
        </authorList>
    </citation>
    <scope>NUCLEOTIDE SEQUENCE [LARGE SCALE GENOMIC DNA]</scope>
    <source>
        <strain>cv. SP-80-3280</strain>
    </source>
</reference>
<evidence type="ECO:0000255" key="1">
    <source>
        <dbReference type="HAMAP-Rule" id="MF_01393"/>
    </source>
</evidence>
<gene>
    <name evidence="1" type="primary">atpI</name>
    <name type="ordered locus">PS110</name>
</gene>
<name>ATPI_SACHY</name>
<protein>
    <recommendedName>
        <fullName evidence="1">ATP synthase subunit a, chloroplastic</fullName>
    </recommendedName>
    <alternativeName>
        <fullName evidence="1">ATP synthase F0 sector subunit a</fullName>
    </alternativeName>
    <alternativeName>
        <fullName evidence="1">F-ATPase subunit IV</fullName>
    </alternativeName>
</protein>